<gene>
    <name type="primary">Zap70</name>
    <name type="synonym">Srk</name>
    <name type="synonym">Zap-70</name>
</gene>
<dbReference type="EC" id="2.7.10.2"/>
<dbReference type="EMBL" id="U04379">
    <property type="protein sequence ID" value="AAA19250.1"/>
    <property type="molecule type" value="mRNA"/>
</dbReference>
<dbReference type="EMBL" id="U77667">
    <property type="protein sequence ID" value="AAB36538.1"/>
    <property type="molecule type" value="mRNA"/>
</dbReference>
<dbReference type="EMBL" id="AB083210">
    <property type="protein sequence ID" value="BAC43746.1"/>
    <property type="molecule type" value="mRNA"/>
</dbReference>
<dbReference type="EMBL" id="AB084383">
    <property type="protein sequence ID" value="BAC67015.1"/>
    <property type="molecule type" value="mRNA"/>
</dbReference>
<dbReference type="EMBL" id="AK039883">
    <property type="protein sequence ID" value="BAC30471.1"/>
    <property type="molecule type" value="mRNA"/>
</dbReference>
<dbReference type="EMBL" id="AC084389">
    <property type="status" value="NOT_ANNOTATED_CDS"/>
    <property type="molecule type" value="mRNA"/>
</dbReference>
<dbReference type="EMBL" id="BC029727">
    <property type="protein sequence ID" value="AAH29727.1"/>
    <property type="molecule type" value="mRNA"/>
</dbReference>
<dbReference type="CCDS" id="CCDS14888.1">
    <molecule id="P43404-1"/>
</dbReference>
<dbReference type="PIR" id="I48914">
    <property type="entry name" value="I48914"/>
</dbReference>
<dbReference type="RefSeq" id="NP_001276541.1">
    <molecule id="P43404-2"/>
    <property type="nucleotide sequence ID" value="NM_001289612.2"/>
</dbReference>
<dbReference type="RefSeq" id="NP_001276694.1">
    <molecule id="P43404-1"/>
    <property type="nucleotide sequence ID" value="NM_001289765.2"/>
</dbReference>
<dbReference type="RefSeq" id="NP_001407579.1">
    <molecule id="P43404-1"/>
    <property type="nucleotide sequence ID" value="NM_001420650.1"/>
</dbReference>
<dbReference type="RefSeq" id="NP_033565.2">
    <molecule id="P43404-1"/>
    <property type="nucleotide sequence ID" value="NM_009539.3"/>
</dbReference>
<dbReference type="RefSeq" id="XP_006495959.1">
    <property type="nucleotide sequence ID" value="XM_006495896.2"/>
</dbReference>
<dbReference type="SMR" id="P43404"/>
<dbReference type="BioGRID" id="204628">
    <property type="interactions" value="11"/>
</dbReference>
<dbReference type="CORUM" id="P43404"/>
<dbReference type="FunCoup" id="P43404">
    <property type="interactions" value="599"/>
</dbReference>
<dbReference type="IntAct" id="P43404">
    <property type="interactions" value="39"/>
</dbReference>
<dbReference type="MINT" id="P43404"/>
<dbReference type="STRING" id="10090.ENSMUSP00000027291"/>
<dbReference type="BindingDB" id="P43404"/>
<dbReference type="ChEMBL" id="CHEMBL2034801"/>
<dbReference type="iPTMnet" id="P43404"/>
<dbReference type="PhosphoSitePlus" id="P43404"/>
<dbReference type="jPOST" id="P43404"/>
<dbReference type="PaxDb" id="10090-ENSMUSP00000027291"/>
<dbReference type="ProteomicsDB" id="275262">
    <molecule id="P43404-1"/>
</dbReference>
<dbReference type="ProteomicsDB" id="275263">
    <molecule id="P43404-2"/>
</dbReference>
<dbReference type="ProteomicsDB" id="275264">
    <molecule id="P43404-3"/>
</dbReference>
<dbReference type="Antibodypedia" id="685">
    <property type="antibodies" value="2283 antibodies from 50 providers"/>
</dbReference>
<dbReference type="DNASU" id="22637"/>
<dbReference type="Ensembl" id="ENSMUST00000027291.7">
    <molecule id="P43404-1"/>
    <property type="protein sequence ID" value="ENSMUSP00000027291.5"/>
    <property type="gene ID" value="ENSMUSG00000026117.11"/>
</dbReference>
<dbReference type="GeneID" id="22637"/>
<dbReference type="KEGG" id="mmu:22637"/>
<dbReference type="UCSC" id="uc007aqz.2">
    <molecule id="P43404-1"/>
    <property type="organism name" value="mouse"/>
</dbReference>
<dbReference type="UCSC" id="uc007arb.2">
    <molecule id="P43404-3"/>
    <property type="organism name" value="mouse"/>
</dbReference>
<dbReference type="AGR" id="MGI:99613"/>
<dbReference type="CTD" id="7535"/>
<dbReference type="MGI" id="MGI:99613">
    <property type="gene designation" value="Zap70"/>
</dbReference>
<dbReference type="VEuPathDB" id="HostDB:ENSMUSG00000026117"/>
<dbReference type="eggNOG" id="ENOG502QT06">
    <property type="taxonomic scope" value="Eukaryota"/>
</dbReference>
<dbReference type="GeneTree" id="ENSGT00940000159185"/>
<dbReference type="HOGENOM" id="CLU_000288_7_2_1"/>
<dbReference type="InParanoid" id="P43404"/>
<dbReference type="OMA" id="ACPNTSA"/>
<dbReference type="OrthoDB" id="535945at2759"/>
<dbReference type="PhylomeDB" id="P43404"/>
<dbReference type="TreeFam" id="TF351629"/>
<dbReference type="BRENDA" id="2.7.10.2">
    <property type="organism ID" value="3474"/>
</dbReference>
<dbReference type="Reactome" id="R-MMU-202430">
    <property type="pathway name" value="Translocation of ZAP-70 to Immunological synapse"/>
</dbReference>
<dbReference type="Reactome" id="R-MMU-202433">
    <property type="pathway name" value="Generation of second messenger molecules"/>
</dbReference>
<dbReference type="Reactome" id="R-MMU-9013407">
    <property type="pathway name" value="RHOH GTPase cycle"/>
</dbReference>
<dbReference type="SIGNOR" id="P43404"/>
<dbReference type="BioGRID-ORCS" id="22637">
    <property type="hits" value="6 hits in 79 CRISPR screens"/>
</dbReference>
<dbReference type="ChiTaRS" id="Zap70">
    <property type="organism name" value="mouse"/>
</dbReference>
<dbReference type="PRO" id="PR:P43404"/>
<dbReference type="Proteomes" id="UP000000589">
    <property type="component" value="Chromosome 1"/>
</dbReference>
<dbReference type="RNAct" id="P43404">
    <property type="molecule type" value="protein"/>
</dbReference>
<dbReference type="Bgee" id="ENSMUSG00000026117">
    <property type="expression patterns" value="Expressed in thymus and 64 other cell types or tissues"/>
</dbReference>
<dbReference type="ExpressionAtlas" id="P43404">
    <property type="expression patterns" value="baseline and differential"/>
</dbReference>
<dbReference type="GO" id="GO:0005911">
    <property type="term" value="C:cell-cell junction"/>
    <property type="evidence" value="ECO:0000314"/>
    <property type="project" value="MGI"/>
</dbReference>
<dbReference type="GO" id="GO:0005737">
    <property type="term" value="C:cytoplasm"/>
    <property type="evidence" value="ECO:0000314"/>
    <property type="project" value="UniProtKB"/>
</dbReference>
<dbReference type="GO" id="GO:0005829">
    <property type="term" value="C:cytosol"/>
    <property type="evidence" value="ECO:0000314"/>
    <property type="project" value="MGI"/>
</dbReference>
<dbReference type="GO" id="GO:0001772">
    <property type="term" value="C:immunological synapse"/>
    <property type="evidence" value="ECO:0000314"/>
    <property type="project" value="UniProtKB"/>
</dbReference>
<dbReference type="GO" id="GO:0016020">
    <property type="term" value="C:membrane"/>
    <property type="evidence" value="ECO:0000314"/>
    <property type="project" value="MGI"/>
</dbReference>
<dbReference type="GO" id="GO:0045121">
    <property type="term" value="C:membrane raft"/>
    <property type="evidence" value="ECO:0007669"/>
    <property type="project" value="Ensembl"/>
</dbReference>
<dbReference type="GO" id="GO:0005886">
    <property type="term" value="C:plasma membrane"/>
    <property type="evidence" value="ECO:0000314"/>
    <property type="project" value="UniProtKB"/>
</dbReference>
<dbReference type="GO" id="GO:0042101">
    <property type="term" value="C:T cell receptor complex"/>
    <property type="evidence" value="ECO:0000266"/>
    <property type="project" value="MGI"/>
</dbReference>
<dbReference type="GO" id="GO:0005524">
    <property type="term" value="F:ATP binding"/>
    <property type="evidence" value="ECO:0000314"/>
    <property type="project" value="MGI"/>
</dbReference>
<dbReference type="GO" id="GO:0004715">
    <property type="term" value="F:non-membrane spanning protein tyrosine kinase activity"/>
    <property type="evidence" value="ECO:0007669"/>
    <property type="project" value="UniProtKB-EC"/>
</dbReference>
<dbReference type="GO" id="GO:0001784">
    <property type="term" value="F:phosphotyrosine residue binding"/>
    <property type="evidence" value="ECO:0000353"/>
    <property type="project" value="MGI"/>
</dbReference>
<dbReference type="GO" id="GO:0004672">
    <property type="term" value="F:protein kinase activity"/>
    <property type="evidence" value="ECO:0000314"/>
    <property type="project" value="MGI"/>
</dbReference>
<dbReference type="GO" id="GO:0004713">
    <property type="term" value="F:protein tyrosine kinase activity"/>
    <property type="evidence" value="ECO:0000314"/>
    <property type="project" value="MGI"/>
</dbReference>
<dbReference type="GO" id="GO:0002250">
    <property type="term" value="P:adaptive immune response"/>
    <property type="evidence" value="ECO:0007669"/>
    <property type="project" value="UniProtKB-KW"/>
</dbReference>
<dbReference type="GO" id="GO:0046632">
    <property type="term" value="P:alpha-beta T cell differentiation"/>
    <property type="evidence" value="ECO:0000315"/>
    <property type="project" value="MGI"/>
</dbReference>
<dbReference type="GO" id="GO:0043366">
    <property type="term" value="P:beta selection"/>
    <property type="evidence" value="ECO:0000316"/>
    <property type="project" value="MGI"/>
</dbReference>
<dbReference type="GO" id="GO:0019722">
    <property type="term" value="P:calcium-mediated signaling"/>
    <property type="evidence" value="ECO:0000315"/>
    <property type="project" value="MGI"/>
</dbReference>
<dbReference type="GO" id="GO:0035556">
    <property type="term" value="P:intracellular signal transduction"/>
    <property type="evidence" value="ECO:0000315"/>
    <property type="project" value="MGI"/>
</dbReference>
<dbReference type="GO" id="GO:0045060">
    <property type="term" value="P:negative thymic T cell selection"/>
    <property type="evidence" value="ECO:0000315"/>
    <property type="project" value="MGI"/>
</dbReference>
<dbReference type="GO" id="GO:0046638">
    <property type="term" value="P:positive regulation of alpha-beta T cell differentiation"/>
    <property type="evidence" value="ECO:0000315"/>
    <property type="project" value="MGI"/>
</dbReference>
<dbReference type="GO" id="GO:0046641">
    <property type="term" value="P:positive regulation of alpha-beta T cell proliferation"/>
    <property type="evidence" value="ECO:0000316"/>
    <property type="project" value="MGI"/>
</dbReference>
<dbReference type="GO" id="GO:0050850">
    <property type="term" value="P:positive regulation of calcium-mediated signaling"/>
    <property type="evidence" value="ECO:0000315"/>
    <property type="project" value="MGI"/>
</dbReference>
<dbReference type="GO" id="GO:0045582">
    <property type="term" value="P:positive regulation of T cell differentiation"/>
    <property type="evidence" value="ECO:0000315"/>
    <property type="project" value="MGI"/>
</dbReference>
<dbReference type="GO" id="GO:0045059">
    <property type="term" value="P:positive thymic T cell selection"/>
    <property type="evidence" value="ECO:0000315"/>
    <property type="project" value="MGI"/>
</dbReference>
<dbReference type="GO" id="GO:0030217">
    <property type="term" value="P:T cell differentiation"/>
    <property type="evidence" value="ECO:0000315"/>
    <property type="project" value="MGI"/>
</dbReference>
<dbReference type="GO" id="GO:0050852">
    <property type="term" value="P:T cell receptor signaling pathway"/>
    <property type="evidence" value="ECO:0000315"/>
    <property type="project" value="MGI"/>
</dbReference>
<dbReference type="GO" id="GO:0045061">
    <property type="term" value="P:thymic T cell selection"/>
    <property type="evidence" value="ECO:0000315"/>
    <property type="project" value="MGI"/>
</dbReference>
<dbReference type="CDD" id="cd05115">
    <property type="entry name" value="PTKc_Zap-70"/>
    <property type="match status" value="1"/>
</dbReference>
<dbReference type="CDD" id="cd09938">
    <property type="entry name" value="SH2_N-SH2_Zap70_Syk_like"/>
    <property type="match status" value="1"/>
</dbReference>
<dbReference type="FunFam" id="1.10.930.10:FF:000001">
    <property type="entry name" value="Tyrosine-protein kinase"/>
    <property type="match status" value="1"/>
</dbReference>
<dbReference type="FunFam" id="3.30.200.20:FF:000185">
    <property type="entry name" value="Tyrosine-protein kinase"/>
    <property type="match status" value="1"/>
</dbReference>
<dbReference type="FunFam" id="3.30.505.10:FF:000031">
    <property type="entry name" value="Tyrosine-protein kinase"/>
    <property type="match status" value="1"/>
</dbReference>
<dbReference type="FunFam" id="3.30.505.10:FF:000063">
    <property type="entry name" value="Tyrosine-protein kinase"/>
    <property type="match status" value="1"/>
</dbReference>
<dbReference type="FunFam" id="1.10.510.10:FF:000216">
    <property type="entry name" value="Tyrosine-protein kinase SYK"/>
    <property type="match status" value="1"/>
</dbReference>
<dbReference type="Gene3D" id="3.30.200.20">
    <property type="entry name" value="Phosphorylase Kinase, domain 1"/>
    <property type="match status" value="1"/>
</dbReference>
<dbReference type="Gene3D" id="3.30.505.10">
    <property type="entry name" value="SH2 domain"/>
    <property type="match status" value="2"/>
</dbReference>
<dbReference type="Gene3D" id="1.10.930.10">
    <property type="entry name" value="Syk Kinase, Chain A, domain 2"/>
    <property type="match status" value="1"/>
</dbReference>
<dbReference type="Gene3D" id="1.10.510.10">
    <property type="entry name" value="Transferase(Phosphotransferase) domain 1"/>
    <property type="match status" value="1"/>
</dbReference>
<dbReference type="InterPro" id="IPR011009">
    <property type="entry name" value="Kinase-like_dom_sf"/>
</dbReference>
<dbReference type="InterPro" id="IPR023420">
    <property type="entry name" value="Kinase_SYK/ZAP-70_inter-SH2_sf"/>
</dbReference>
<dbReference type="InterPro" id="IPR050198">
    <property type="entry name" value="Non-receptor_tyrosine_kinases"/>
</dbReference>
<dbReference type="InterPro" id="IPR000719">
    <property type="entry name" value="Prot_kinase_dom"/>
</dbReference>
<dbReference type="InterPro" id="IPR017441">
    <property type="entry name" value="Protein_kinase_ATP_BS"/>
</dbReference>
<dbReference type="InterPro" id="IPR001245">
    <property type="entry name" value="Ser-Thr/Tyr_kinase_cat_dom"/>
</dbReference>
<dbReference type="InterPro" id="IPR000980">
    <property type="entry name" value="SH2"/>
</dbReference>
<dbReference type="InterPro" id="IPR036860">
    <property type="entry name" value="SH2_dom_sf"/>
</dbReference>
<dbReference type="InterPro" id="IPR035838">
    <property type="entry name" value="SYK/ZAP-70_N_SH2"/>
</dbReference>
<dbReference type="InterPro" id="IPR008266">
    <property type="entry name" value="Tyr_kinase_AS"/>
</dbReference>
<dbReference type="InterPro" id="IPR020635">
    <property type="entry name" value="Tyr_kinase_cat_dom"/>
</dbReference>
<dbReference type="InterPro" id="IPR012234">
    <property type="entry name" value="Tyr_kinase_non-rcpt_SYK/ZAP70"/>
</dbReference>
<dbReference type="PANTHER" id="PTHR24418">
    <property type="entry name" value="TYROSINE-PROTEIN KINASE"/>
    <property type="match status" value="1"/>
</dbReference>
<dbReference type="Pfam" id="PF07714">
    <property type="entry name" value="PK_Tyr_Ser-Thr"/>
    <property type="match status" value="1"/>
</dbReference>
<dbReference type="Pfam" id="PF00017">
    <property type="entry name" value="SH2"/>
    <property type="match status" value="2"/>
</dbReference>
<dbReference type="PIRSF" id="PIRSF000604">
    <property type="entry name" value="TyrPK_SYK"/>
    <property type="match status" value="1"/>
</dbReference>
<dbReference type="PRINTS" id="PR00401">
    <property type="entry name" value="SH2DOMAIN"/>
</dbReference>
<dbReference type="PRINTS" id="PR00109">
    <property type="entry name" value="TYRKINASE"/>
</dbReference>
<dbReference type="SMART" id="SM00252">
    <property type="entry name" value="SH2"/>
    <property type="match status" value="2"/>
</dbReference>
<dbReference type="SMART" id="SM00219">
    <property type="entry name" value="TyrKc"/>
    <property type="match status" value="1"/>
</dbReference>
<dbReference type="SUPFAM" id="SSF56112">
    <property type="entry name" value="Protein kinase-like (PK-like)"/>
    <property type="match status" value="1"/>
</dbReference>
<dbReference type="SUPFAM" id="SSF55550">
    <property type="entry name" value="SH2 domain"/>
    <property type="match status" value="2"/>
</dbReference>
<dbReference type="PROSITE" id="PS00107">
    <property type="entry name" value="PROTEIN_KINASE_ATP"/>
    <property type="match status" value="1"/>
</dbReference>
<dbReference type="PROSITE" id="PS50011">
    <property type="entry name" value="PROTEIN_KINASE_DOM"/>
    <property type="match status" value="1"/>
</dbReference>
<dbReference type="PROSITE" id="PS00109">
    <property type="entry name" value="PROTEIN_KINASE_TYR"/>
    <property type="match status" value="1"/>
</dbReference>
<dbReference type="PROSITE" id="PS50001">
    <property type="entry name" value="SH2"/>
    <property type="match status" value="2"/>
</dbReference>
<proteinExistence type="evidence at protein level"/>
<sequence>MPDPAAHLPFFYGSISRAEAEEHLKLAGMADGLFLLRQCLRSLGGYVLSLVHDVRFHHFPIERQLNGTYAIAGGKAHCGPAELCQFYSQDPDGLPCNLRKPCNRPPGLEPQPGVFDCLRDAMVRDYVRQTWKLEGDALEQAIISQAPQVEKLIATTAHERMPWYHSSLTREEAERKLYSGQQTDGKFLLRPRKEQGTYALSLVYGKTVYHYLISQDKAGKYCIPEGTKFDTLWQLVEYLKLKADGLIYRLKEVCPNSSASAAVAAPTLPAHPSTFTQPQRRVDTLNSDGYTPEPARLASSTDKPRPMPMDTSVYESPYSDPEELKDKKLFLKRENLLVADIELGCGNFGSVRQGVYRMRKKQIDVAIKVLKQGTEKADKDEMMREAQIMHQLDNPYIVRLIGVCQAEALMLVMEMAGGGPLHKFLLGKKEEIPVSNVAELLHQVAMGMKYLEEKNFVHRDLAARNVLLVNRHYAKISDFGLSKALGADDSYYTARSAGKWPLKWYAPECINFRKFSSRSDVWSYGVTMWEAFSYGQKPYKKMKGPEVLDFIKQGKRMECPPECPPEMYALMSDCWIYKWEDRPDFLTVEQRMRNYYYSLASRAEGPPQCEQVAEAACG</sequence>
<accession>P43404</accession>
<accession>P97455</accession>
<accession>Q80VV2</accession>
<accession>Q8CHJ3</accession>
<evidence type="ECO:0000250" key="1"/>
<evidence type="ECO:0000250" key="2">
    <source>
        <dbReference type="UniProtKB" id="P43403"/>
    </source>
</evidence>
<evidence type="ECO:0000255" key="3">
    <source>
        <dbReference type="PROSITE-ProRule" id="PRU00159"/>
    </source>
</evidence>
<evidence type="ECO:0000255" key="4">
    <source>
        <dbReference type="PROSITE-ProRule" id="PRU00191"/>
    </source>
</evidence>
<evidence type="ECO:0000255" key="5">
    <source>
        <dbReference type="PROSITE-ProRule" id="PRU10028"/>
    </source>
</evidence>
<evidence type="ECO:0000256" key="6">
    <source>
        <dbReference type="SAM" id="MobiDB-lite"/>
    </source>
</evidence>
<evidence type="ECO:0000269" key="7">
    <source>
    </source>
</evidence>
<evidence type="ECO:0000269" key="8">
    <source>
    </source>
</evidence>
<evidence type="ECO:0000269" key="9">
    <source>
    </source>
</evidence>
<evidence type="ECO:0000269" key="10">
    <source>
    </source>
</evidence>
<evidence type="ECO:0000269" key="11">
    <source>
    </source>
</evidence>
<evidence type="ECO:0000269" key="12">
    <source>
    </source>
</evidence>
<evidence type="ECO:0000269" key="13">
    <source>
    </source>
</evidence>
<evidence type="ECO:0000269" key="14">
    <source>
    </source>
</evidence>
<evidence type="ECO:0000269" key="15">
    <source>
    </source>
</evidence>
<evidence type="ECO:0000269" key="16">
    <source>
    </source>
</evidence>
<evidence type="ECO:0000269" key="17">
    <source>
    </source>
</evidence>
<evidence type="ECO:0000269" key="18">
    <source>
    </source>
</evidence>
<evidence type="ECO:0000303" key="19">
    <source>
    </source>
</evidence>
<evidence type="ECO:0000303" key="20">
    <source ref="4"/>
</evidence>
<evidence type="ECO:0000305" key="21"/>
<comment type="function">
    <text evidence="11 12 15 16 17">Tyrosine kinase that plays an essential role in regulation of the adaptive immune response. Regulates motility, adhesion and cytokine expression of mature T-cells, as well as thymocyte development. Also contributes to the development and activation of primary B-lymphocytes. When antigen presenting cells (APC) activate T-cell receptor (TCR), a serie of phosphorylations lead to the recruitment of ZAP70 to the doubly phosphorylated TCR component CD3Z through ITAM motif at the plasma membrane. This recruitment serves to localization to the stimulated TCR and to relieve its autoinhibited conformation. Release of ZAP70 active conformation is further stabilized by phosphorylation mediated by LCK. Subsequently, ZAP70 phosphorylates at least 2 essential adapter proteins: LAT and LCP2. In turn, a large number of signaling molecules are recruited and ultimately lead to lymphokine production, T-cell proliferation and differentiation. Furthermore, ZAP70 controls cytoskeleton modifications, adhesion and mobility of T-lymphocytes, thus ensuring correct delivery of effectors to the APC. ZAP70 is also required for TCR-CD3Z internalization and degradation through interaction with the E3 ubiquitin-protein ligase CBL and adapter proteins SLA and SLA2. Thus, ZAP70 regulates both T-cell activation switch on and switch off by modulating TCR expression at the T-cell surface. During thymocyte development, ZAP70 promotes survival and cell-cycle progression of developing thymocytes before positive selection (when cells are still CD4/CD8 double negative). Additionally, ZAP70-dependent signaling pathway may also contribute to primary B-cells formation and activation through B-cell receptor (BCR).</text>
</comment>
<comment type="catalytic activity">
    <reaction evidence="5">
        <text>L-tyrosyl-[protein] + ATP = O-phospho-L-tyrosyl-[protein] + ADP + H(+)</text>
        <dbReference type="Rhea" id="RHEA:10596"/>
        <dbReference type="Rhea" id="RHEA-COMP:10136"/>
        <dbReference type="Rhea" id="RHEA-COMP:20101"/>
        <dbReference type="ChEBI" id="CHEBI:15378"/>
        <dbReference type="ChEBI" id="CHEBI:30616"/>
        <dbReference type="ChEBI" id="CHEBI:46858"/>
        <dbReference type="ChEBI" id="CHEBI:61978"/>
        <dbReference type="ChEBI" id="CHEBI:456216"/>
        <dbReference type="EC" id="2.7.10.2"/>
    </reaction>
</comment>
<comment type="activity regulation">
    <text>Activated by phosphorylation at Tyr-492 in the activation loop.</text>
</comment>
<comment type="subunit">
    <text evidence="2 7 8 9 10 13 14 16">Interacts with CD247/CD3Z; this interaction docks ZAP70 at the stimulated TCR (By similarity). Interacts with NFAM1 (PubMed:15143214). Interacts with adapter protein SLA; this interaction negatively regulates T-cell receptor signaling (PubMed:10662792). Interacts with VAV1 (By similarity). Interacts with CBL; this interaction promotes ubiquitination, internalization and subsequent degradation of CD247/CD3Z (By similarity). Identified in a complex with CBL and UBE2L3 (By similarity). Interacts with SHB (By similarity). Interacts with adapter protein SLA2; this interaction negatively regulates T-cell receptor signaling (PubMed:11891219). Interacts with CBLB (PubMed:10646608). Interacts (via SH2 domains) with RHOH; this interaction regulates ZAP70 subcellular localization (PubMed:17028588). Interacts with DEF6 (PubMed:12648457). Interacts (ubiquitinated form) with OTUD7B and UBASH3B (PubMed:26903241).</text>
</comment>
<comment type="interaction">
    <interactant intactId="EBI-3862932">
        <id>P43404</id>
    </interactant>
    <interactant intactId="EBI-7803400">
        <id>P24161</id>
        <label>Cd247</label>
    </interactant>
    <organismsDiffer>false</organismsDiffer>
    <experiments>4</experiments>
</comment>
<comment type="subcellular location">
    <subcellularLocation>
        <location>Cytoplasm</location>
    </subcellularLocation>
    <subcellularLocation>
        <location>Cell membrane</location>
        <topology>Peripheral membrane protein</topology>
    </subcellularLocation>
    <text>In quiescent T-lymphocytes, ZAP70 is cytoplasmic. Upon TCR activation, it is recruited at the plasma membrane by interacting with CD3Z. Colocalizes together with RHOH in the immunological synapse. RHOH is required for its proper localization to the cell membrane and cytoskeleton fractions in the thymocytes.</text>
</comment>
<comment type="alternative products">
    <event type="alternative splicing"/>
    <isoform>
        <id>P43404-1</id>
        <name>1</name>
        <sequence type="displayed"/>
    </isoform>
    <isoform>
        <id>P43404-2</id>
        <name>2</name>
        <name>TZK</name>
        <sequence type="described" ref="VSP_031159"/>
    </isoform>
    <isoform>
        <id>P43404-3</id>
        <name>3</name>
        <name>TZK-2</name>
        <sequence type="described" ref="VSP_031160 VSP_031161"/>
    </isoform>
</comment>
<comment type="tissue specificity">
    <text evidence="12">Isoform 1 and isoform 2 are expressed in thymus, spleen and lymph nodes.</text>
</comment>
<comment type="developmental stage">
    <text evidence="12">Isoform 2 is expressed in developing thymocytes from the CD44+CD25- stage up to mature T-cells. Isoform 1 is not expressed in thymocytes at the CD44+CD25- or CD44+CD25+ stages.</text>
</comment>
<comment type="domain">
    <text evidence="1">Composed of 2 N-terminal SH2 domains and a C-terminal kinase domain. The tandem SH2 domains bind to the doubly phosphorylated tyrosine-based activation motif (ITAM) of CD247/CD3Z and the non-canonical phosphorylated tyrosine-based activation motif (TAM) of RHOH (By similarity). The interdomain B located between the second SH2 and the kinase domain has been implicated in binding to other signaling molecules including CBL or VAV1. Thus, ZAP70 can also function as a scaffold by recruiting additional factors to the stimulated TCR complex (By similarity).</text>
</comment>
<comment type="PTM">
    <text>Phosphorylated on tyrosine residues upon T-cell antigen receptor (TCR) stimulation. Phosphorylation of Tyr-314 and Tyr-314 are essential for ZAP70 positive function on T-lymphocyte activation whereas Tyr-290 has a negative regulatory role. Within the C-terminal kinase domain, Tyr-491 and Tyr-492 are phosphorylated after TCR induction, Tyr-491 playing a negative regulatory role and Tyr-492 a positive. Tyr-492 is dephosphorylated by PTN22.</text>
</comment>
<comment type="PTM">
    <text evidence="16">Ubiquitinated in response to T cell activation. Deubiquitinated by OTUD7B.</text>
</comment>
<comment type="disruption phenotype">
    <text evidence="11 17">Mice lack both CD4 and CD8 positive mature T-lymphocytes. Displays a complete block in B-Cell development at the pro-B cell stage in the absence of both SYK and ZAP70.</text>
</comment>
<comment type="similarity">
    <text evidence="3">Belongs to the protein kinase superfamily. Tyr protein kinase family. SYK/ZAP-70 subfamily.</text>
</comment>
<keyword id="KW-1064">Adaptive immunity</keyword>
<keyword id="KW-0025">Alternative splicing</keyword>
<keyword id="KW-0067">ATP-binding</keyword>
<keyword id="KW-1003">Cell membrane</keyword>
<keyword id="KW-0963">Cytoplasm</keyword>
<keyword id="KW-0391">Immunity</keyword>
<keyword id="KW-1017">Isopeptide bond</keyword>
<keyword id="KW-0418">Kinase</keyword>
<keyword id="KW-0472">Membrane</keyword>
<keyword id="KW-0547">Nucleotide-binding</keyword>
<keyword id="KW-0597">Phosphoprotein</keyword>
<keyword id="KW-1185">Reference proteome</keyword>
<keyword id="KW-0677">Repeat</keyword>
<keyword id="KW-0727">SH2 domain</keyword>
<keyword id="KW-0808">Transferase</keyword>
<keyword id="KW-0829">Tyrosine-protein kinase</keyword>
<keyword id="KW-0832">Ubl conjugation</keyword>
<feature type="chain" id="PRO_0000088169" description="Tyrosine-protein kinase ZAP-70">
    <location>
        <begin position="1"/>
        <end position="618"/>
    </location>
</feature>
<feature type="domain" description="SH2 1" evidence="4">
    <location>
        <begin position="10"/>
        <end position="102"/>
    </location>
</feature>
<feature type="domain" description="SH2 2" evidence="4">
    <location>
        <begin position="163"/>
        <end position="254"/>
    </location>
</feature>
<feature type="domain" description="Protein kinase" evidence="3">
    <location>
        <begin position="337"/>
        <end position="597"/>
    </location>
</feature>
<feature type="region of interest" description="Interdomain A">
    <location>
        <begin position="103"/>
        <end position="162"/>
    </location>
</feature>
<feature type="region of interest" description="Interdomain B">
    <location>
        <begin position="255"/>
        <end position="336"/>
    </location>
</feature>
<feature type="region of interest" description="Disordered" evidence="6">
    <location>
        <begin position="270"/>
        <end position="320"/>
    </location>
</feature>
<feature type="compositionally biased region" description="Polar residues" evidence="6">
    <location>
        <begin position="273"/>
        <end position="289"/>
    </location>
</feature>
<feature type="active site" description="Proton acceptor" evidence="3 5">
    <location>
        <position position="460"/>
    </location>
</feature>
<feature type="binding site" evidence="3">
    <location>
        <begin position="343"/>
        <end position="351"/>
    </location>
    <ligand>
        <name>ATP</name>
        <dbReference type="ChEBI" id="CHEBI:30616"/>
    </ligand>
</feature>
<feature type="binding site" evidence="3">
    <location>
        <position position="368"/>
    </location>
    <ligand>
        <name>ATP</name>
        <dbReference type="ChEBI" id="CHEBI:30616"/>
    </ligand>
</feature>
<feature type="modified residue" description="Phosphotyrosine" evidence="2">
    <location>
        <position position="248"/>
    </location>
</feature>
<feature type="modified residue" description="Phosphoserine" evidence="2">
    <location>
        <position position="287"/>
    </location>
</feature>
<feature type="modified residue" description="Phosphotyrosine" evidence="2">
    <location>
        <position position="290"/>
    </location>
</feature>
<feature type="modified residue" description="Phosphotyrosine; by LCK" evidence="2">
    <location>
        <position position="314"/>
    </location>
</feature>
<feature type="modified residue" description="Phosphotyrosine" evidence="2">
    <location>
        <position position="318"/>
    </location>
</feature>
<feature type="modified residue" description="Phosphotyrosine" evidence="2">
    <location>
        <position position="491"/>
    </location>
</feature>
<feature type="modified residue" description="Phosphotyrosine" evidence="2">
    <location>
        <position position="492"/>
    </location>
</feature>
<feature type="cross-link" description="Glycyl lysine isopeptide (Lys-Gly) (interchain with G-Cter in ubiquitin)" evidence="2">
    <location>
        <position position="543"/>
    </location>
</feature>
<feature type="splice variant" id="VSP_031160" description="In isoform 3." evidence="20">
    <location>
        <begin position="1"/>
        <end position="309"/>
    </location>
</feature>
<feature type="splice variant" id="VSP_031159" description="In isoform 2." evidence="19">
    <location>
        <begin position="1"/>
        <end position="306"/>
    </location>
</feature>
<feature type="splice variant" id="VSP_031161" description="In isoform 3." evidence="20">
    <original>DTSVYESPYSDPEELKDKKLFLKRENLLVADIELGCGNFGSVRQGVYRMRK</original>
    <variation>MAYGRVSGVSELSRVLYVPFPPPPFLSNPGVHDTRMYTQHAMLSVASHLGR</variation>
    <location>
        <begin position="310"/>
        <end position="360"/>
    </location>
</feature>
<feature type="sequence variant" description="In ST; causes an absence of mature T-cells due to thymocyte development being arrested at the CD4+CD8+ stage." evidence="18">
    <original>R</original>
    <variation>C</variation>
    <location>
        <position position="464"/>
    </location>
</feature>
<feature type="sequence conflict" description="In Ref. 1; AAA19250." evidence="21" ref="1">
    <original>R</original>
    <variation>C</variation>
    <location>
        <position position="124"/>
    </location>
</feature>
<feature type="sequence conflict" description="In Ref. 4; BAC67015." evidence="21" ref="4">
    <original>VTMW</original>
    <variation>GHHV</variation>
    <location>
        <begin position="526"/>
        <end position="529"/>
    </location>
</feature>
<feature type="sequence conflict" description="In Ref. 1; AAA19250." evidence="21" ref="1">
    <original>E</original>
    <variation>Q</variation>
    <location>
        <position position="546"/>
    </location>
</feature>
<feature type="sequence conflict" description="In Ref. 1; AAA19250 and 2; AAB36538." evidence="21" ref="1 2">
    <original>L</original>
    <variation>P</variation>
    <location>
        <position position="599"/>
    </location>
</feature>
<name>ZAP70_MOUSE</name>
<organism>
    <name type="scientific">Mus musculus</name>
    <name type="common">Mouse</name>
    <dbReference type="NCBI Taxonomy" id="10090"/>
    <lineage>
        <taxon>Eukaryota</taxon>
        <taxon>Metazoa</taxon>
        <taxon>Chordata</taxon>
        <taxon>Craniata</taxon>
        <taxon>Vertebrata</taxon>
        <taxon>Euteleostomi</taxon>
        <taxon>Mammalia</taxon>
        <taxon>Eutheria</taxon>
        <taxon>Euarchontoglires</taxon>
        <taxon>Glires</taxon>
        <taxon>Rodentia</taxon>
        <taxon>Myomorpha</taxon>
        <taxon>Muroidea</taxon>
        <taxon>Muridae</taxon>
        <taxon>Murinae</taxon>
        <taxon>Mus</taxon>
        <taxon>Mus</taxon>
    </lineage>
</organism>
<reference key="1">
    <citation type="journal article" date="1994" name="Mol. Cell. Biol.">
        <title>Interactions of p59fyn and ZAP-70 with T-cell receptor activation motifs: defining the nature of a signalling motif.</title>
        <authorList>
            <person name="Gauen L.K.T."/>
            <person name="Zhu Y."/>
            <person name="Letourner F."/>
            <person name="Hu Q."/>
            <person name="Bolen J.B."/>
            <person name="Matis L.A."/>
            <person name="Klausner R.D."/>
            <person name="Shaw A.S."/>
        </authorList>
    </citation>
    <scope>NUCLEOTIDE SEQUENCE [MRNA] (ISOFORM 1)</scope>
    <source>
        <tissue>Thymus</tissue>
    </source>
</reference>
<reference key="2">
    <citation type="journal article" date="1997" name="Immunity">
        <title>A spontaneously arising mutation in the DLAARN motif of murine ZAP-70 abrogates kinase activity and arrests thymocyte development.</title>
        <authorList>
            <person name="Wiest D.L."/>
            <person name="Ashe J.M."/>
            <person name="Howcroft T.K."/>
            <person name="Lee H.-M."/>
            <person name="Kemper D.M."/>
            <person name="Negishi I."/>
            <person name="Singer D.S."/>
            <person name="Singer A."/>
            <person name="Abe R."/>
        </authorList>
    </citation>
    <scope>NUCLEOTIDE SEQUENCE [MRNA] (ISOFORM 1)</scope>
    <scope>VARIANT ST CYS-464</scope>
    <source>
        <strain>C57BL/6J</strain>
        <tissue>Thymocyte</tissue>
    </source>
</reference>
<reference key="3">
    <citation type="journal article" date="2004" name="Biochem. Biophys. Res. Commun.">
        <title>Identification of a novel isoform of ZAP-70, truncated ZAP kinase.</title>
        <authorList>
            <person name="Kuroyama H."/>
            <person name="Ikeda T."/>
            <person name="Kasai M."/>
            <person name="Yamasaki S."/>
            <person name="Tatsumi M."/>
            <person name="Utsuyama M."/>
            <person name="Saito T."/>
            <person name="Hirokawa K."/>
        </authorList>
    </citation>
    <scope>NUCLEOTIDE SEQUENCE [MRNA] (ISOFORM 2)</scope>
    <scope>FUNCTION</scope>
    <scope>SUBCELLULAR LOCATION</scope>
    <scope>TISSUE SPECIFICITY</scope>
    <scope>DEVELOPMENTAL STAGE</scope>
    <source>
        <strain>C57BL/6J</strain>
        <tissue>Thymus</tissue>
    </source>
</reference>
<reference key="4">
    <citation type="submission" date="2002-04" db="EMBL/GenBank/DDBJ databases">
        <title>Mouse TZK-2.</title>
        <authorList>
            <person name="Ikeda T."/>
            <person name="Kuroyama H."/>
        </authorList>
    </citation>
    <scope>NUCLEOTIDE SEQUENCE [MRNA] (ISOFORM 3)</scope>
</reference>
<reference key="5">
    <citation type="journal article" date="2005" name="Science">
        <title>The transcriptional landscape of the mammalian genome.</title>
        <authorList>
            <person name="Carninci P."/>
            <person name="Kasukawa T."/>
            <person name="Katayama S."/>
            <person name="Gough J."/>
            <person name="Frith M.C."/>
            <person name="Maeda N."/>
            <person name="Oyama R."/>
            <person name="Ravasi T."/>
            <person name="Lenhard B."/>
            <person name="Wells C."/>
            <person name="Kodzius R."/>
            <person name="Shimokawa K."/>
            <person name="Bajic V.B."/>
            <person name="Brenner S.E."/>
            <person name="Batalov S."/>
            <person name="Forrest A.R."/>
            <person name="Zavolan M."/>
            <person name="Davis M.J."/>
            <person name="Wilming L.G."/>
            <person name="Aidinis V."/>
            <person name="Allen J.E."/>
            <person name="Ambesi-Impiombato A."/>
            <person name="Apweiler R."/>
            <person name="Aturaliya R.N."/>
            <person name="Bailey T.L."/>
            <person name="Bansal M."/>
            <person name="Baxter L."/>
            <person name="Beisel K.W."/>
            <person name="Bersano T."/>
            <person name="Bono H."/>
            <person name="Chalk A.M."/>
            <person name="Chiu K.P."/>
            <person name="Choudhary V."/>
            <person name="Christoffels A."/>
            <person name="Clutterbuck D.R."/>
            <person name="Crowe M.L."/>
            <person name="Dalla E."/>
            <person name="Dalrymple B.P."/>
            <person name="de Bono B."/>
            <person name="Della Gatta G."/>
            <person name="di Bernardo D."/>
            <person name="Down T."/>
            <person name="Engstrom P."/>
            <person name="Fagiolini M."/>
            <person name="Faulkner G."/>
            <person name="Fletcher C.F."/>
            <person name="Fukushima T."/>
            <person name="Furuno M."/>
            <person name="Futaki S."/>
            <person name="Gariboldi M."/>
            <person name="Georgii-Hemming P."/>
            <person name="Gingeras T.R."/>
            <person name="Gojobori T."/>
            <person name="Green R.E."/>
            <person name="Gustincich S."/>
            <person name="Harbers M."/>
            <person name="Hayashi Y."/>
            <person name="Hensch T.K."/>
            <person name="Hirokawa N."/>
            <person name="Hill D."/>
            <person name="Huminiecki L."/>
            <person name="Iacono M."/>
            <person name="Ikeo K."/>
            <person name="Iwama A."/>
            <person name="Ishikawa T."/>
            <person name="Jakt M."/>
            <person name="Kanapin A."/>
            <person name="Katoh M."/>
            <person name="Kawasawa Y."/>
            <person name="Kelso J."/>
            <person name="Kitamura H."/>
            <person name="Kitano H."/>
            <person name="Kollias G."/>
            <person name="Krishnan S.P."/>
            <person name="Kruger A."/>
            <person name="Kummerfeld S.K."/>
            <person name="Kurochkin I.V."/>
            <person name="Lareau L.F."/>
            <person name="Lazarevic D."/>
            <person name="Lipovich L."/>
            <person name="Liu J."/>
            <person name="Liuni S."/>
            <person name="McWilliam S."/>
            <person name="Madan Babu M."/>
            <person name="Madera M."/>
            <person name="Marchionni L."/>
            <person name="Matsuda H."/>
            <person name="Matsuzawa S."/>
            <person name="Miki H."/>
            <person name="Mignone F."/>
            <person name="Miyake S."/>
            <person name="Morris K."/>
            <person name="Mottagui-Tabar S."/>
            <person name="Mulder N."/>
            <person name="Nakano N."/>
            <person name="Nakauchi H."/>
            <person name="Ng P."/>
            <person name="Nilsson R."/>
            <person name="Nishiguchi S."/>
            <person name="Nishikawa S."/>
            <person name="Nori F."/>
            <person name="Ohara O."/>
            <person name="Okazaki Y."/>
            <person name="Orlando V."/>
            <person name="Pang K.C."/>
            <person name="Pavan W.J."/>
            <person name="Pavesi G."/>
            <person name="Pesole G."/>
            <person name="Petrovsky N."/>
            <person name="Piazza S."/>
            <person name="Reed J."/>
            <person name="Reid J.F."/>
            <person name="Ring B.Z."/>
            <person name="Ringwald M."/>
            <person name="Rost B."/>
            <person name="Ruan Y."/>
            <person name="Salzberg S.L."/>
            <person name="Sandelin A."/>
            <person name="Schneider C."/>
            <person name="Schoenbach C."/>
            <person name="Sekiguchi K."/>
            <person name="Semple C.A."/>
            <person name="Seno S."/>
            <person name="Sessa L."/>
            <person name="Sheng Y."/>
            <person name="Shibata Y."/>
            <person name="Shimada H."/>
            <person name="Shimada K."/>
            <person name="Silva D."/>
            <person name="Sinclair B."/>
            <person name="Sperling S."/>
            <person name="Stupka E."/>
            <person name="Sugiura K."/>
            <person name="Sultana R."/>
            <person name="Takenaka Y."/>
            <person name="Taki K."/>
            <person name="Tammoja K."/>
            <person name="Tan S.L."/>
            <person name="Tang S."/>
            <person name="Taylor M.S."/>
            <person name="Tegner J."/>
            <person name="Teichmann S.A."/>
            <person name="Ueda H.R."/>
            <person name="van Nimwegen E."/>
            <person name="Verardo R."/>
            <person name="Wei C.L."/>
            <person name="Yagi K."/>
            <person name="Yamanishi H."/>
            <person name="Zabarovsky E."/>
            <person name="Zhu S."/>
            <person name="Zimmer A."/>
            <person name="Hide W."/>
            <person name="Bult C."/>
            <person name="Grimmond S.M."/>
            <person name="Teasdale R.D."/>
            <person name="Liu E.T."/>
            <person name="Brusic V."/>
            <person name="Quackenbush J."/>
            <person name="Wahlestedt C."/>
            <person name="Mattick J.S."/>
            <person name="Hume D.A."/>
            <person name="Kai C."/>
            <person name="Sasaki D."/>
            <person name="Tomaru Y."/>
            <person name="Fukuda S."/>
            <person name="Kanamori-Katayama M."/>
            <person name="Suzuki M."/>
            <person name="Aoki J."/>
            <person name="Arakawa T."/>
            <person name="Iida J."/>
            <person name="Imamura K."/>
            <person name="Itoh M."/>
            <person name="Kato T."/>
            <person name="Kawaji H."/>
            <person name="Kawagashira N."/>
            <person name="Kawashima T."/>
            <person name="Kojima M."/>
            <person name="Kondo S."/>
            <person name="Konno H."/>
            <person name="Nakano K."/>
            <person name="Ninomiya N."/>
            <person name="Nishio T."/>
            <person name="Okada M."/>
            <person name="Plessy C."/>
            <person name="Shibata K."/>
            <person name="Shiraki T."/>
            <person name="Suzuki S."/>
            <person name="Tagami M."/>
            <person name="Waki K."/>
            <person name="Watahiki A."/>
            <person name="Okamura-Oho Y."/>
            <person name="Suzuki H."/>
            <person name="Kawai J."/>
            <person name="Hayashizaki Y."/>
        </authorList>
    </citation>
    <scope>NUCLEOTIDE SEQUENCE [LARGE SCALE MRNA] (ISOFORM 1)</scope>
    <source>
        <strain>C57BL/6J</strain>
        <tissue>Thymus</tissue>
    </source>
</reference>
<reference key="6">
    <citation type="journal article" date="2009" name="PLoS Biol.">
        <title>Lineage-specific biology revealed by a finished genome assembly of the mouse.</title>
        <authorList>
            <person name="Church D.M."/>
            <person name="Goodstadt L."/>
            <person name="Hillier L.W."/>
            <person name="Zody M.C."/>
            <person name="Goldstein S."/>
            <person name="She X."/>
            <person name="Bult C.J."/>
            <person name="Agarwala R."/>
            <person name="Cherry J.L."/>
            <person name="DiCuccio M."/>
            <person name="Hlavina W."/>
            <person name="Kapustin Y."/>
            <person name="Meric P."/>
            <person name="Maglott D."/>
            <person name="Birtle Z."/>
            <person name="Marques A.C."/>
            <person name="Graves T."/>
            <person name="Zhou S."/>
            <person name="Teague B."/>
            <person name="Potamousis K."/>
            <person name="Churas C."/>
            <person name="Place M."/>
            <person name="Herschleb J."/>
            <person name="Runnheim R."/>
            <person name="Forrest D."/>
            <person name="Amos-Landgraf J."/>
            <person name="Schwartz D.C."/>
            <person name="Cheng Z."/>
            <person name="Lindblad-Toh K."/>
            <person name="Eichler E.E."/>
            <person name="Ponting C.P."/>
        </authorList>
    </citation>
    <scope>NUCLEOTIDE SEQUENCE [LARGE SCALE GENOMIC DNA]</scope>
    <source>
        <strain>C57BL/6J</strain>
    </source>
</reference>
<reference key="7">
    <citation type="journal article" date="2004" name="Genome Res.">
        <title>The status, quality, and expansion of the NIH full-length cDNA project: the Mammalian Gene Collection (MGC).</title>
        <authorList>
            <consortium name="The MGC Project Team"/>
        </authorList>
    </citation>
    <scope>NUCLEOTIDE SEQUENCE [LARGE SCALE MRNA] (ISOFORM 1)</scope>
    <source>
        <strain>FVB/N</strain>
        <tissue>Salivary gland</tissue>
    </source>
</reference>
<reference key="8">
    <citation type="journal article" date="1995" name="Nature">
        <title>Essential role for ZAP-70 in both positive and negative selection of thymocytes.</title>
        <authorList>
            <person name="Negishi I."/>
            <person name="Motoyama N."/>
            <person name="Nakayama K."/>
            <person name="Nakayama K."/>
            <person name="Senju S."/>
            <person name="Hatakeyama S."/>
            <person name="Zhang Q."/>
            <person name="Chan A.C."/>
            <person name="Loh D.Y."/>
        </authorList>
    </citation>
    <scope>DISRUPTION PHENOTYPE</scope>
    <scope>FUNCTION</scope>
</reference>
<reference key="9">
    <citation type="journal article" date="2000" name="J. Exp. Med.">
        <title>Src-like adaptor protein (SLAP) is a negative regulator of T cell receptor signaling.</title>
        <authorList>
            <person name="Sosinowski T."/>
            <person name="Pandey A."/>
            <person name="Dixit V.M."/>
            <person name="Weiss A."/>
        </authorList>
    </citation>
    <scope>INTERACTION WITH SLA</scope>
</reference>
<reference key="10">
    <citation type="journal article" date="2000" name="Nature">
        <title>Negative regulation of lymphocyte activation and autoimmunity by the molecular adaptor Cbl-b.</title>
        <authorList>
            <person name="Bachmaier K."/>
            <person name="Krawczyk C."/>
            <person name="Kozieradzki I."/>
            <person name="Kong Y.-Y."/>
            <person name="Sasaki T."/>
            <person name="Oliveira-dos-Santos A."/>
            <person name="Mariathasan S."/>
            <person name="Bouchard D."/>
            <person name="Wakeham A."/>
            <person name="Itie A."/>
            <person name="Le J."/>
            <person name="Ohashi P.S."/>
            <person name="Sarosi I."/>
            <person name="Nishina H."/>
            <person name="Lipkowitz S."/>
            <person name="Penninger J.M."/>
        </authorList>
    </citation>
    <scope>INTERACTION WITH CBLB</scope>
</reference>
<reference key="11">
    <citation type="journal article" date="2002" name="J. Biol. Chem.">
        <title>A novel Src homology 2 domain-containing molecule, Src-like adapter protein-2 (SLAP-2), which negatively regulates T cell receptor signaling.</title>
        <authorList>
            <person name="Pandey A."/>
            <person name="Ibarrola N."/>
            <person name="Kratchmarova I."/>
            <person name="Fernandez M.M."/>
            <person name="Constantinescu S.N."/>
            <person name="Ohara O."/>
            <person name="Sawasdikosol S."/>
            <person name="Lodish H.F."/>
            <person name="Mann M."/>
        </authorList>
    </citation>
    <scope>INTERACTION WITH SLA2</scope>
</reference>
<reference key="12">
    <citation type="journal article" date="2003" name="Immunity">
        <title>SWAP-70-like adapter of T cells, an adapter protein that regulates early TCR-initiated signaling in Th2 lineage cells.</title>
        <authorList>
            <person name="Tanaka Y."/>
            <person name="Bi K."/>
            <person name="Kitamura R."/>
            <person name="Hong S."/>
            <person name="Altman Y."/>
            <person name="Matsumoto A."/>
            <person name="Tabata H."/>
            <person name="Lebedeva S."/>
            <person name="Bushway P.J."/>
            <person name="Altman A."/>
        </authorList>
    </citation>
    <scope>INTERACTION WITH DEF6</scope>
</reference>
<reference key="13">
    <citation type="journal article" date="2003" name="Immunity">
        <title>Unexpected requirement for ZAP-70 in pre-B cell development and allelic exclusion.</title>
        <authorList>
            <person name="Schweighoffer E."/>
            <person name="Vanes L."/>
            <person name="Mathiot A."/>
            <person name="Nakamura T."/>
            <person name="Tybulewicz V.L."/>
        </authorList>
    </citation>
    <scope>DISRUPTION PHENOTYPE</scope>
    <scope>FUNCTION</scope>
</reference>
<reference key="14">
    <citation type="journal article" date="2004" name="Proc. Natl. Acad. Sci. U.S.A.">
        <title>NFAM1, an immunoreceptor tyrosine-based activation motif-bearing molecule that regulates B cell development and signaling.</title>
        <authorList>
            <person name="Ohtsuka M."/>
            <person name="Arase H."/>
            <person name="Takeuchi A."/>
            <person name="Yamasaki S."/>
            <person name="Shiina R."/>
            <person name="Suenaga T."/>
            <person name="Sakurai D."/>
            <person name="Yokosuka T."/>
            <person name="Arase N."/>
            <person name="Iwashima M."/>
            <person name="Kitamura T."/>
            <person name="Moriya H."/>
            <person name="Saito T."/>
        </authorList>
    </citation>
    <scope>INTERACTION WITH NFAM1</scope>
</reference>
<reference key="15">
    <citation type="journal article" date="2006" name="Nat. Immunol.">
        <title>RhoH GTPase recruits and activates Zap70 required for T cell receptor signaling and thymocyte development.</title>
        <authorList>
            <person name="Gu Y."/>
            <person name="Chae H.-D."/>
            <person name="Siefring J.E."/>
            <person name="Jasti A.C."/>
            <person name="Hildeman D.A."/>
            <person name="Williams D.A."/>
        </authorList>
    </citation>
    <scope>SUBCELLULAR LOCATION</scope>
    <scope>INTERACTION WITH RHOH</scope>
    <scope>DOMAIN</scope>
</reference>
<reference key="16">
    <citation type="journal article" date="2007" name="J. Exp. Med.">
        <title>Distinct roles for Syk and ZAP-70 during early thymocyte development.</title>
        <authorList>
            <person name="Palacios E.H."/>
            <person name="Weiss A."/>
        </authorList>
    </citation>
    <scope>FUNCTION IN THYMOCYTE DEVELOPMENT</scope>
</reference>
<reference key="17">
    <citation type="journal article" date="2016" name="J. Exp. Med.">
        <title>Otud7b facilitates T cell activation and inflammatory responses by regulating Zap70 ubiquitination.</title>
        <authorList>
            <person name="Hu H."/>
            <person name="Wang H."/>
            <person name="Xiao Y."/>
            <person name="Jin J."/>
            <person name="Chang J.H."/>
            <person name="Zou Q."/>
            <person name="Xie X."/>
            <person name="Cheng X."/>
            <person name="Sun S.C."/>
        </authorList>
    </citation>
    <scope>FUNCTION</scope>
    <scope>INTERACTION WITH OTUD7B AND UBASH3B</scope>
    <scope>UBIQUITINATION</scope>
    <scope>IDENTIFICATION BY MASS SPECTROMETRY</scope>
</reference>
<protein>
    <recommendedName>
        <fullName>Tyrosine-protein kinase ZAP-70</fullName>
        <ecNumber>2.7.10.2</ecNumber>
    </recommendedName>
    <alternativeName>
        <fullName>70 kDa zeta-chain associated protein</fullName>
    </alternativeName>
    <alternativeName>
        <fullName>Syk-related tyrosine kinase</fullName>
    </alternativeName>
</protein>